<accession>C3N178</accession>
<evidence type="ECO:0000255" key="1">
    <source>
        <dbReference type="HAMAP-Rule" id="MF_00499"/>
    </source>
</evidence>
<evidence type="ECO:0000305" key="2"/>
<sequence>MEFPKALIKRPNYHFEYPHKRKDKRIGRGFSIGELEKAGLNINNARKLGIIVDIRRKSVHEENVEVLKKFLEQLSNQKS</sequence>
<name>RL13E_SACI3</name>
<organism>
    <name type="scientific">Saccharolobus islandicus (strain M.16.27)</name>
    <name type="common">Sulfolobus islandicus</name>
    <dbReference type="NCBI Taxonomy" id="427318"/>
    <lineage>
        <taxon>Archaea</taxon>
        <taxon>Thermoproteota</taxon>
        <taxon>Thermoprotei</taxon>
        <taxon>Sulfolobales</taxon>
        <taxon>Sulfolobaceae</taxon>
        <taxon>Saccharolobus</taxon>
    </lineage>
</organism>
<dbReference type="EMBL" id="CP001401">
    <property type="protein sequence ID" value="ACP54263.1"/>
    <property type="molecule type" value="Genomic_DNA"/>
</dbReference>
<dbReference type="RefSeq" id="WP_012710410.1">
    <property type="nucleotide sequence ID" value="NC_012632.1"/>
</dbReference>
<dbReference type="SMR" id="C3N178"/>
<dbReference type="KEGG" id="sim:M1627_0234"/>
<dbReference type="HOGENOM" id="CLU_179008_0_0_2"/>
<dbReference type="Proteomes" id="UP000002307">
    <property type="component" value="Chromosome"/>
</dbReference>
<dbReference type="GO" id="GO:1990904">
    <property type="term" value="C:ribonucleoprotein complex"/>
    <property type="evidence" value="ECO:0007669"/>
    <property type="project" value="UniProtKB-KW"/>
</dbReference>
<dbReference type="GO" id="GO:0005840">
    <property type="term" value="C:ribosome"/>
    <property type="evidence" value="ECO:0007669"/>
    <property type="project" value="UniProtKB-KW"/>
</dbReference>
<dbReference type="GO" id="GO:0003735">
    <property type="term" value="F:structural constituent of ribosome"/>
    <property type="evidence" value="ECO:0007669"/>
    <property type="project" value="InterPro"/>
</dbReference>
<dbReference type="GO" id="GO:0006412">
    <property type="term" value="P:translation"/>
    <property type="evidence" value="ECO:0007669"/>
    <property type="project" value="UniProtKB-UniRule"/>
</dbReference>
<dbReference type="HAMAP" id="MF_00499">
    <property type="entry name" value="Ribosomal_eL13"/>
    <property type="match status" value="1"/>
</dbReference>
<dbReference type="InterPro" id="IPR001380">
    <property type="entry name" value="Ribosomal_eL13"/>
</dbReference>
<dbReference type="NCBIfam" id="NF008914">
    <property type="entry name" value="PRK12277.1"/>
    <property type="match status" value="1"/>
</dbReference>
<dbReference type="Pfam" id="PF01294">
    <property type="entry name" value="Ribosomal_L13e"/>
    <property type="match status" value="1"/>
</dbReference>
<proteinExistence type="inferred from homology"/>
<protein>
    <recommendedName>
        <fullName evidence="1">Large ribosomal subunit protein eL13</fullName>
    </recommendedName>
    <alternativeName>
        <fullName evidence="2">50S ribosomal protein L13e</fullName>
    </alternativeName>
</protein>
<gene>
    <name evidence="1" type="primary">rpl13e</name>
    <name type="ordered locus">M1627_0234</name>
</gene>
<feature type="chain" id="PRO_1000206483" description="Large ribosomal subunit protein eL13">
    <location>
        <begin position="1"/>
        <end position="79"/>
    </location>
</feature>
<keyword id="KW-0687">Ribonucleoprotein</keyword>
<keyword id="KW-0689">Ribosomal protein</keyword>
<comment type="similarity">
    <text evidence="1">Belongs to the eukaryotic ribosomal protein eL13 family.</text>
</comment>
<reference key="1">
    <citation type="journal article" date="2009" name="Proc. Natl. Acad. Sci. U.S.A.">
        <title>Biogeography of the Sulfolobus islandicus pan-genome.</title>
        <authorList>
            <person name="Reno M.L."/>
            <person name="Held N.L."/>
            <person name="Fields C.J."/>
            <person name="Burke P.V."/>
            <person name="Whitaker R.J."/>
        </authorList>
    </citation>
    <scope>NUCLEOTIDE SEQUENCE [LARGE SCALE GENOMIC DNA]</scope>
    <source>
        <strain>M.16.27</strain>
    </source>
</reference>